<reference key="1">
    <citation type="journal article" date="2011" name="PLoS ONE">
        <title>The genome of Akkermansia muciniphila, a dedicated intestinal mucin degrader, and its use in exploring intestinal metagenomes.</title>
        <authorList>
            <person name="van Passel M.W."/>
            <person name="Kant R."/>
            <person name="Zoetendal E.G."/>
            <person name="Plugge C.M."/>
            <person name="Derrien M."/>
            <person name="Malfatti S.A."/>
            <person name="Chain P.S."/>
            <person name="Woyke T."/>
            <person name="Palva A."/>
            <person name="de Vos W.M."/>
            <person name="Smidt H."/>
        </authorList>
    </citation>
    <scope>NUCLEOTIDE SEQUENCE [LARGE SCALE GENOMIC DNA]</scope>
    <source>
        <strain>ATCC BAA-835 / DSM 22959 / JCM 33894 / BCRC 81048 / CCUG 64013 / CIP 107961 / Muc</strain>
    </source>
</reference>
<accession>B2UMF1</accession>
<proteinExistence type="inferred from homology"/>
<name>DAPB_AKKM8</name>
<keyword id="KW-0028">Amino-acid biosynthesis</keyword>
<keyword id="KW-0963">Cytoplasm</keyword>
<keyword id="KW-0220">Diaminopimelate biosynthesis</keyword>
<keyword id="KW-0457">Lysine biosynthesis</keyword>
<keyword id="KW-0520">NAD</keyword>
<keyword id="KW-0521">NADP</keyword>
<keyword id="KW-0560">Oxidoreductase</keyword>
<keyword id="KW-1185">Reference proteome</keyword>
<dbReference type="EC" id="1.17.1.8" evidence="1"/>
<dbReference type="EMBL" id="CP001071">
    <property type="protein sequence ID" value="ACD04100.1"/>
    <property type="molecule type" value="Genomic_DNA"/>
</dbReference>
<dbReference type="RefSeq" id="WP_012419315.1">
    <property type="nucleotide sequence ID" value="NZ_CP071807.1"/>
</dbReference>
<dbReference type="SMR" id="B2UMF1"/>
<dbReference type="STRING" id="349741.Amuc_0257"/>
<dbReference type="PaxDb" id="349741-Amuc_0257"/>
<dbReference type="GeneID" id="60879683"/>
<dbReference type="KEGG" id="amu:Amuc_0257"/>
<dbReference type="eggNOG" id="COG0289">
    <property type="taxonomic scope" value="Bacteria"/>
</dbReference>
<dbReference type="HOGENOM" id="CLU_047479_2_1_0"/>
<dbReference type="OrthoDB" id="9790352at2"/>
<dbReference type="BioCyc" id="AMUC349741:G1GBX-287-MONOMER"/>
<dbReference type="UniPathway" id="UPA00034">
    <property type="reaction ID" value="UER00018"/>
</dbReference>
<dbReference type="Proteomes" id="UP000001031">
    <property type="component" value="Chromosome"/>
</dbReference>
<dbReference type="GO" id="GO:0005829">
    <property type="term" value="C:cytosol"/>
    <property type="evidence" value="ECO:0007669"/>
    <property type="project" value="TreeGrafter"/>
</dbReference>
<dbReference type="GO" id="GO:0008839">
    <property type="term" value="F:4-hydroxy-tetrahydrodipicolinate reductase"/>
    <property type="evidence" value="ECO:0007669"/>
    <property type="project" value="UniProtKB-EC"/>
</dbReference>
<dbReference type="GO" id="GO:0051287">
    <property type="term" value="F:NAD binding"/>
    <property type="evidence" value="ECO:0007669"/>
    <property type="project" value="UniProtKB-UniRule"/>
</dbReference>
<dbReference type="GO" id="GO:0050661">
    <property type="term" value="F:NADP binding"/>
    <property type="evidence" value="ECO:0007669"/>
    <property type="project" value="UniProtKB-UniRule"/>
</dbReference>
<dbReference type="GO" id="GO:0016726">
    <property type="term" value="F:oxidoreductase activity, acting on CH or CH2 groups, NAD or NADP as acceptor"/>
    <property type="evidence" value="ECO:0007669"/>
    <property type="project" value="UniProtKB-UniRule"/>
</dbReference>
<dbReference type="GO" id="GO:0019877">
    <property type="term" value="P:diaminopimelate biosynthetic process"/>
    <property type="evidence" value="ECO:0007669"/>
    <property type="project" value="UniProtKB-UniRule"/>
</dbReference>
<dbReference type="GO" id="GO:0009089">
    <property type="term" value="P:lysine biosynthetic process via diaminopimelate"/>
    <property type="evidence" value="ECO:0007669"/>
    <property type="project" value="UniProtKB-UniRule"/>
</dbReference>
<dbReference type="CDD" id="cd02274">
    <property type="entry name" value="DHDPR_N"/>
    <property type="match status" value="1"/>
</dbReference>
<dbReference type="FunFam" id="3.30.360.10:FF:000004">
    <property type="entry name" value="4-hydroxy-tetrahydrodipicolinate reductase"/>
    <property type="match status" value="1"/>
</dbReference>
<dbReference type="Gene3D" id="3.30.360.10">
    <property type="entry name" value="Dihydrodipicolinate Reductase, domain 2"/>
    <property type="match status" value="1"/>
</dbReference>
<dbReference type="Gene3D" id="3.40.50.720">
    <property type="entry name" value="NAD(P)-binding Rossmann-like Domain"/>
    <property type="match status" value="1"/>
</dbReference>
<dbReference type="HAMAP" id="MF_00102">
    <property type="entry name" value="DapB"/>
    <property type="match status" value="1"/>
</dbReference>
<dbReference type="InterPro" id="IPR022663">
    <property type="entry name" value="DapB_C"/>
</dbReference>
<dbReference type="InterPro" id="IPR000846">
    <property type="entry name" value="DapB_N"/>
</dbReference>
<dbReference type="InterPro" id="IPR022664">
    <property type="entry name" value="DapB_N_CS"/>
</dbReference>
<dbReference type="InterPro" id="IPR023940">
    <property type="entry name" value="DHDPR_bac"/>
</dbReference>
<dbReference type="InterPro" id="IPR036291">
    <property type="entry name" value="NAD(P)-bd_dom_sf"/>
</dbReference>
<dbReference type="NCBIfam" id="TIGR00036">
    <property type="entry name" value="dapB"/>
    <property type="match status" value="1"/>
</dbReference>
<dbReference type="PANTHER" id="PTHR20836:SF0">
    <property type="entry name" value="4-HYDROXY-TETRAHYDRODIPICOLINATE REDUCTASE 1, CHLOROPLASTIC-RELATED"/>
    <property type="match status" value="1"/>
</dbReference>
<dbReference type="PANTHER" id="PTHR20836">
    <property type="entry name" value="DIHYDRODIPICOLINATE REDUCTASE"/>
    <property type="match status" value="1"/>
</dbReference>
<dbReference type="Pfam" id="PF05173">
    <property type="entry name" value="DapB_C"/>
    <property type="match status" value="1"/>
</dbReference>
<dbReference type="Pfam" id="PF01113">
    <property type="entry name" value="DapB_N"/>
    <property type="match status" value="1"/>
</dbReference>
<dbReference type="PIRSF" id="PIRSF000161">
    <property type="entry name" value="DHPR"/>
    <property type="match status" value="1"/>
</dbReference>
<dbReference type="SUPFAM" id="SSF55347">
    <property type="entry name" value="Glyceraldehyde-3-phosphate dehydrogenase-like, C-terminal domain"/>
    <property type="match status" value="1"/>
</dbReference>
<dbReference type="SUPFAM" id="SSF51735">
    <property type="entry name" value="NAD(P)-binding Rossmann-fold domains"/>
    <property type="match status" value="1"/>
</dbReference>
<dbReference type="PROSITE" id="PS01298">
    <property type="entry name" value="DAPB"/>
    <property type="match status" value="1"/>
</dbReference>
<comment type="function">
    <text evidence="1">Catalyzes the conversion of 4-hydroxy-tetrahydrodipicolinate (HTPA) to tetrahydrodipicolinate.</text>
</comment>
<comment type="catalytic activity">
    <reaction evidence="1">
        <text>(S)-2,3,4,5-tetrahydrodipicolinate + NAD(+) + H2O = (2S,4S)-4-hydroxy-2,3,4,5-tetrahydrodipicolinate + NADH + H(+)</text>
        <dbReference type="Rhea" id="RHEA:35323"/>
        <dbReference type="ChEBI" id="CHEBI:15377"/>
        <dbReference type="ChEBI" id="CHEBI:15378"/>
        <dbReference type="ChEBI" id="CHEBI:16845"/>
        <dbReference type="ChEBI" id="CHEBI:57540"/>
        <dbReference type="ChEBI" id="CHEBI:57945"/>
        <dbReference type="ChEBI" id="CHEBI:67139"/>
        <dbReference type="EC" id="1.17.1.8"/>
    </reaction>
</comment>
<comment type="catalytic activity">
    <reaction evidence="1">
        <text>(S)-2,3,4,5-tetrahydrodipicolinate + NADP(+) + H2O = (2S,4S)-4-hydroxy-2,3,4,5-tetrahydrodipicolinate + NADPH + H(+)</text>
        <dbReference type="Rhea" id="RHEA:35331"/>
        <dbReference type="ChEBI" id="CHEBI:15377"/>
        <dbReference type="ChEBI" id="CHEBI:15378"/>
        <dbReference type="ChEBI" id="CHEBI:16845"/>
        <dbReference type="ChEBI" id="CHEBI:57783"/>
        <dbReference type="ChEBI" id="CHEBI:58349"/>
        <dbReference type="ChEBI" id="CHEBI:67139"/>
        <dbReference type="EC" id="1.17.1.8"/>
    </reaction>
</comment>
<comment type="pathway">
    <text evidence="1">Amino-acid biosynthesis; L-lysine biosynthesis via DAP pathway; (S)-tetrahydrodipicolinate from L-aspartate: step 4/4.</text>
</comment>
<comment type="subcellular location">
    <subcellularLocation>
        <location evidence="1">Cytoplasm</location>
    </subcellularLocation>
</comment>
<comment type="similarity">
    <text evidence="1">Belongs to the DapB family.</text>
</comment>
<comment type="caution">
    <text evidence="2">Was originally thought to be a dihydrodipicolinate reductase (DHDPR), catalyzing the conversion of dihydrodipicolinate to tetrahydrodipicolinate. However, it was shown in E.coli that the substrate of the enzymatic reaction is not dihydrodipicolinate (DHDP) but in fact (2S,4S)-4-hydroxy-2,3,4,5-tetrahydrodipicolinic acid (HTPA), the product released by the DapA-catalyzed reaction.</text>
</comment>
<protein>
    <recommendedName>
        <fullName evidence="1">4-hydroxy-tetrahydrodipicolinate reductase</fullName>
        <shortName evidence="1">HTPA reductase</shortName>
        <ecNumber evidence="1">1.17.1.8</ecNumber>
    </recommendedName>
</protein>
<evidence type="ECO:0000255" key="1">
    <source>
        <dbReference type="HAMAP-Rule" id="MF_00102"/>
    </source>
</evidence>
<evidence type="ECO:0000305" key="2"/>
<sequence>MISILVTGISGRMGQAIQEAVTQNPDTCVGSTHDQGQELYPALAKCDVAIDFSHHAFTSTLLAEAVANNKPLVIGTTGHTELERQEIVDAAASIPIVFASNYSVGVNALFWLTRKAAQILGGSCDIEVMEMHHRHKIDAPSGTARTLAEILSGAIDRNYEDSVVFGREGLVGPRPAKEIGMHSLRGGDVVGDHTVIFASDGERLELTHKASSRMTFASGAVRAALWLQGREPGLYTMEDVLGLSQL</sequence>
<gene>
    <name evidence="1" type="primary">dapB</name>
    <name type="ordered locus">Amuc_0257</name>
</gene>
<organism>
    <name type="scientific">Akkermansia muciniphila (strain ATCC BAA-835 / DSM 22959 / JCM 33894 / BCRC 81048 / CCUG 64013 / CIP 107961 / Muc)</name>
    <dbReference type="NCBI Taxonomy" id="349741"/>
    <lineage>
        <taxon>Bacteria</taxon>
        <taxon>Pseudomonadati</taxon>
        <taxon>Verrucomicrobiota</taxon>
        <taxon>Verrucomicrobiia</taxon>
        <taxon>Verrucomicrobiales</taxon>
        <taxon>Akkermansiaceae</taxon>
        <taxon>Akkermansia</taxon>
    </lineage>
</organism>
<feature type="chain" id="PRO_1000093941" description="4-hydroxy-tetrahydrodipicolinate reductase">
    <location>
        <begin position="1"/>
        <end position="246"/>
    </location>
</feature>
<feature type="active site" description="Proton donor/acceptor" evidence="1">
    <location>
        <position position="132"/>
    </location>
</feature>
<feature type="active site" description="Proton donor" evidence="1">
    <location>
        <position position="136"/>
    </location>
</feature>
<feature type="binding site" evidence="1">
    <location>
        <begin position="8"/>
        <end position="13"/>
    </location>
    <ligand>
        <name>NAD(+)</name>
        <dbReference type="ChEBI" id="CHEBI:57540"/>
    </ligand>
</feature>
<feature type="binding site" evidence="1">
    <location>
        <begin position="75"/>
        <end position="77"/>
    </location>
    <ligand>
        <name>NAD(+)</name>
        <dbReference type="ChEBI" id="CHEBI:57540"/>
    </ligand>
</feature>
<feature type="binding site" evidence="1">
    <location>
        <begin position="99"/>
        <end position="102"/>
    </location>
    <ligand>
        <name>NAD(+)</name>
        <dbReference type="ChEBI" id="CHEBI:57540"/>
    </ligand>
</feature>
<feature type="binding site" evidence="1">
    <location>
        <position position="133"/>
    </location>
    <ligand>
        <name>(S)-2,3,4,5-tetrahydrodipicolinate</name>
        <dbReference type="ChEBI" id="CHEBI:16845"/>
    </ligand>
</feature>
<feature type="binding site" evidence="1">
    <location>
        <begin position="142"/>
        <end position="143"/>
    </location>
    <ligand>
        <name>(S)-2,3,4,5-tetrahydrodipicolinate</name>
        <dbReference type="ChEBI" id="CHEBI:16845"/>
    </ligand>
</feature>